<proteinExistence type="evidence at protein level"/>
<name>NUSG_MYCTU</name>
<reference key="1">
    <citation type="journal article" date="1998" name="Nature">
        <title>Deciphering the biology of Mycobacterium tuberculosis from the complete genome sequence.</title>
        <authorList>
            <person name="Cole S.T."/>
            <person name="Brosch R."/>
            <person name="Parkhill J."/>
            <person name="Garnier T."/>
            <person name="Churcher C.M."/>
            <person name="Harris D.E."/>
            <person name="Gordon S.V."/>
            <person name="Eiglmeier K."/>
            <person name="Gas S."/>
            <person name="Barry C.E. III"/>
            <person name="Tekaia F."/>
            <person name="Badcock K."/>
            <person name="Basham D."/>
            <person name="Brown D."/>
            <person name="Chillingworth T."/>
            <person name="Connor R."/>
            <person name="Davies R.M."/>
            <person name="Devlin K."/>
            <person name="Feltwell T."/>
            <person name="Gentles S."/>
            <person name="Hamlin N."/>
            <person name="Holroyd S."/>
            <person name="Hornsby T."/>
            <person name="Jagels K."/>
            <person name="Krogh A."/>
            <person name="McLean J."/>
            <person name="Moule S."/>
            <person name="Murphy L.D."/>
            <person name="Oliver S."/>
            <person name="Osborne J."/>
            <person name="Quail M.A."/>
            <person name="Rajandream M.A."/>
            <person name="Rogers J."/>
            <person name="Rutter S."/>
            <person name="Seeger K."/>
            <person name="Skelton S."/>
            <person name="Squares S."/>
            <person name="Squares R."/>
            <person name="Sulston J.E."/>
            <person name="Taylor K."/>
            <person name="Whitehead S."/>
            <person name="Barrell B.G."/>
        </authorList>
    </citation>
    <scope>NUCLEOTIDE SEQUENCE [LARGE SCALE GENOMIC DNA]</scope>
    <source>
        <strain>ATCC 25618 / H37Rv</strain>
    </source>
</reference>
<reference key="2">
    <citation type="journal article" date="2010" name="J. Mol. Biol.">
        <title>A bacterial transcription terminator with inefficient molecular motor action but with a robust transcription termination function.</title>
        <authorList>
            <person name="Kalarickal N.C."/>
            <person name="Ranjan A."/>
            <person name="Kalyani B.S."/>
            <person name="Wal M."/>
            <person name="Sen R."/>
        </authorList>
    </citation>
    <scope>LACK OF INTERACTION WITH RHO</scope>
</reference>
<reference key="3">
    <citation type="journal article" date="2011" name="Mol. Cell. Proteomics">
        <title>Proteogenomic analysis of Mycobacterium tuberculosis by high resolution mass spectrometry.</title>
        <authorList>
            <person name="Kelkar D.S."/>
            <person name="Kumar D."/>
            <person name="Kumar P."/>
            <person name="Balakrishnan L."/>
            <person name="Muthusamy B."/>
            <person name="Yadav A.K."/>
            <person name="Shrivastava P."/>
            <person name="Marimuthu A."/>
            <person name="Anand S."/>
            <person name="Sundaram H."/>
            <person name="Kingsbury R."/>
            <person name="Harsha H.C."/>
            <person name="Nair B."/>
            <person name="Prasad T.S."/>
            <person name="Chauhan D.S."/>
            <person name="Katoch K."/>
            <person name="Katoch V.M."/>
            <person name="Kumar P."/>
            <person name="Chaerkady R."/>
            <person name="Ramachandran S."/>
            <person name="Dash D."/>
            <person name="Pandey A."/>
        </authorList>
    </citation>
    <scope>IDENTIFICATION BY MASS SPECTROMETRY [LARGE SCALE ANALYSIS]</scope>
    <source>
        <strain>ATCC 25618 / H37Rv</strain>
    </source>
</reference>
<comment type="function">
    <text evidence="1">Participates in transcription elongation, termination and antitermination.</text>
</comment>
<comment type="subunit">
    <text>Does not interact with Rho.</text>
</comment>
<comment type="similarity">
    <text evidence="1">Belongs to the NusG family.</text>
</comment>
<accession>P9WIU9</accession>
<accession>L0T7B3</accession>
<accession>P65589</accession>
<accession>P96930</accession>
<keyword id="KW-0002">3D-structure</keyword>
<keyword id="KW-1185">Reference proteome</keyword>
<keyword id="KW-0804">Transcription</keyword>
<keyword id="KW-0889">Transcription antitermination</keyword>
<keyword id="KW-0805">Transcription regulation</keyword>
<keyword id="KW-0806">Transcription termination</keyword>
<sequence length="238" mass="25447">MTTFDGDTSAGEAVDLTEANAFQDAAAPAEEVDPAAALKAELRSKPGDWYVVHSYAGYENKVKANLETRVQNLDVGDYIFQVEVPTEEVTEIKNGQRKQVNRKVLPGYILVRMDLTDDSWAAVRNTPGVTGFVGATSRPSALALDDVVKFLLPRGSTRKAAKGAASTAAAAEAGGLERPVVEVDYEVGESVTVMDGPFATLPATISEVNAEQQKLKVLVSIFGRETPVELTFGQVSKI</sequence>
<evidence type="ECO:0000255" key="1">
    <source>
        <dbReference type="HAMAP-Rule" id="MF_00948"/>
    </source>
</evidence>
<evidence type="ECO:0007829" key="2">
    <source>
        <dbReference type="PDB" id="2MI6"/>
    </source>
</evidence>
<evidence type="ECO:0007829" key="3">
    <source>
        <dbReference type="PDB" id="8E74"/>
    </source>
</evidence>
<dbReference type="EMBL" id="AL123456">
    <property type="protein sequence ID" value="CCP43382.1"/>
    <property type="molecule type" value="Genomic_DNA"/>
</dbReference>
<dbReference type="PIR" id="D70613">
    <property type="entry name" value="D70613"/>
</dbReference>
<dbReference type="RefSeq" id="NP_215153.1">
    <property type="nucleotide sequence ID" value="NC_000962.3"/>
</dbReference>
<dbReference type="RefSeq" id="WP_003403288.1">
    <property type="nucleotide sequence ID" value="NZ_NVQJ01000007.1"/>
</dbReference>
<dbReference type="PDB" id="2MI6">
    <property type="method" value="NMR"/>
    <property type="chains" value="A=178-238"/>
</dbReference>
<dbReference type="PDB" id="8E74">
    <property type="method" value="EM"/>
    <property type="resolution" value="2.94 A"/>
    <property type="chains" value="Z=2-238"/>
</dbReference>
<dbReference type="PDB" id="8E82">
    <property type="method" value="EM"/>
    <property type="resolution" value="3.03 A"/>
    <property type="chains" value="Z=2-238"/>
</dbReference>
<dbReference type="PDB" id="8EOS">
    <property type="method" value="EM"/>
    <property type="resolution" value="3.10 A"/>
    <property type="chains" value="G=1-238"/>
</dbReference>
<dbReference type="PDB" id="8EOT">
    <property type="method" value="EM"/>
    <property type="resolution" value="3.30 A"/>
    <property type="chains" value="G=1-238"/>
</dbReference>
<dbReference type="PDBsum" id="2MI6"/>
<dbReference type="PDBsum" id="8E74"/>
<dbReference type="PDBsum" id="8E82"/>
<dbReference type="PDBsum" id="8EOS"/>
<dbReference type="PDBsum" id="8EOT"/>
<dbReference type="BMRB" id="P9WIU9"/>
<dbReference type="EMDB" id="EMD-28466"/>
<dbReference type="EMDB" id="EMD-28467"/>
<dbReference type="SMR" id="P9WIU9"/>
<dbReference type="FunCoup" id="P9WIU9">
    <property type="interactions" value="157"/>
</dbReference>
<dbReference type="STRING" id="83332.Rv0639"/>
<dbReference type="PaxDb" id="83332-Rv0639"/>
<dbReference type="DNASU" id="888039"/>
<dbReference type="GeneID" id="45424599"/>
<dbReference type="GeneID" id="888039"/>
<dbReference type="KEGG" id="mtu:Rv0639"/>
<dbReference type="KEGG" id="mtv:RVBD_0639"/>
<dbReference type="TubercuList" id="Rv0639"/>
<dbReference type="eggNOG" id="COG0250">
    <property type="taxonomic scope" value="Bacteria"/>
</dbReference>
<dbReference type="InParanoid" id="P9WIU9"/>
<dbReference type="OrthoDB" id="9809075at2"/>
<dbReference type="PhylomeDB" id="P9WIU9"/>
<dbReference type="EvolutionaryTrace" id="P9WIU9"/>
<dbReference type="Proteomes" id="UP000001584">
    <property type="component" value="Chromosome"/>
</dbReference>
<dbReference type="GO" id="GO:0005829">
    <property type="term" value="C:cytosol"/>
    <property type="evidence" value="ECO:0000318"/>
    <property type="project" value="GO_Central"/>
</dbReference>
<dbReference type="GO" id="GO:0009274">
    <property type="term" value="C:peptidoglycan-based cell wall"/>
    <property type="evidence" value="ECO:0007005"/>
    <property type="project" value="MTBBASE"/>
</dbReference>
<dbReference type="GO" id="GO:0005886">
    <property type="term" value="C:plasma membrane"/>
    <property type="evidence" value="ECO:0007005"/>
    <property type="project" value="MTBBASE"/>
</dbReference>
<dbReference type="GO" id="GO:0006353">
    <property type="term" value="P:DNA-templated transcription termination"/>
    <property type="evidence" value="ECO:0007669"/>
    <property type="project" value="UniProtKB-UniRule"/>
</dbReference>
<dbReference type="GO" id="GO:0032784">
    <property type="term" value="P:regulation of DNA-templated transcription elongation"/>
    <property type="evidence" value="ECO:0007669"/>
    <property type="project" value="InterPro"/>
</dbReference>
<dbReference type="GO" id="GO:0031564">
    <property type="term" value="P:transcription antitermination"/>
    <property type="evidence" value="ECO:0007669"/>
    <property type="project" value="UniProtKB-UniRule"/>
</dbReference>
<dbReference type="GO" id="GO:0140673">
    <property type="term" value="P:transcription elongation-coupled chromatin remodeling"/>
    <property type="evidence" value="ECO:0007669"/>
    <property type="project" value="InterPro"/>
</dbReference>
<dbReference type="CDD" id="cd06091">
    <property type="entry name" value="KOW_NusG"/>
    <property type="match status" value="1"/>
</dbReference>
<dbReference type="CDD" id="cd09891">
    <property type="entry name" value="NGN_Bact_1"/>
    <property type="match status" value="1"/>
</dbReference>
<dbReference type="FunFam" id="2.30.30.30:FF:000002">
    <property type="entry name" value="Transcription termination/antitermination factor NusG"/>
    <property type="match status" value="1"/>
</dbReference>
<dbReference type="FunFam" id="3.30.70.940:FF:000002">
    <property type="entry name" value="Transcription termination/antitermination protein NusG"/>
    <property type="match status" value="1"/>
</dbReference>
<dbReference type="Gene3D" id="2.30.30.30">
    <property type="match status" value="1"/>
</dbReference>
<dbReference type="Gene3D" id="3.30.70.940">
    <property type="entry name" value="NusG, N-terminal domain"/>
    <property type="match status" value="1"/>
</dbReference>
<dbReference type="HAMAP" id="MF_00948">
    <property type="entry name" value="NusG"/>
    <property type="match status" value="1"/>
</dbReference>
<dbReference type="InterPro" id="IPR047050">
    <property type="entry name" value="NGN"/>
</dbReference>
<dbReference type="InterPro" id="IPR006645">
    <property type="entry name" value="NGN-like_dom"/>
</dbReference>
<dbReference type="InterPro" id="IPR036735">
    <property type="entry name" value="NGN_dom_sf"/>
</dbReference>
<dbReference type="InterPro" id="IPR043425">
    <property type="entry name" value="NusG-like"/>
</dbReference>
<dbReference type="InterPro" id="IPR014722">
    <property type="entry name" value="Rib_uL2_dom2"/>
</dbReference>
<dbReference type="InterPro" id="IPR001062">
    <property type="entry name" value="Transcrpt_antiterm_NusG"/>
</dbReference>
<dbReference type="InterPro" id="IPR015869">
    <property type="entry name" value="Transcrpt_antiterm_NusG_bac_CS"/>
</dbReference>
<dbReference type="InterPro" id="IPR008991">
    <property type="entry name" value="Translation_prot_SH3-like_sf"/>
</dbReference>
<dbReference type="NCBIfam" id="TIGR00922">
    <property type="entry name" value="nusG"/>
    <property type="match status" value="1"/>
</dbReference>
<dbReference type="PANTHER" id="PTHR30265">
    <property type="entry name" value="RHO-INTERACTING TRANSCRIPTION TERMINATION FACTOR NUSG"/>
    <property type="match status" value="1"/>
</dbReference>
<dbReference type="PANTHER" id="PTHR30265:SF2">
    <property type="entry name" value="TRANSCRIPTION TERMINATION_ANTITERMINATION PROTEIN NUSG"/>
    <property type="match status" value="1"/>
</dbReference>
<dbReference type="Pfam" id="PF02357">
    <property type="entry name" value="NusG"/>
    <property type="match status" value="1"/>
</dbReference>
<dbReference type="PRINTS" id="PR00338">
    <property type="entry name" value="NUSGTNSCPFCT"/>
</dbReference>
<dbReference type="SMART" id="SM00738">
    <property type="entry name" value="NGN"/>
    <property type="match status" value="1"/>
</dbReference>
<dbReference type="SUPFAM" id="SSF82679">
    <property type="entry name" value="N-utilization substance G protein NusG, N-terminal domain"/>
    <property type="match status" value="1"/>
</dbReference>
<dbReference type="SUPFAM" id="SSF50104">
    <property type="entry name" value="Translation proteins SH3-like domain"/>
    <property type="match status" value="1"/>
</dbReference>
<dbReference type="PROSITE" id="PS01014">
    <property type="entry name" value="NUSG"/>
    <property type="match status" value="1"/>
</dbReference>
<protein>
    <recommendedName>
        <fullName evidence="1">Transcription termination/antitermination protein NusG</fullName>
    </recommendedName>
</protein>
<organism>
    <name type="scientific">Mycobacterium tuberculosis (strain ATCC 25618 / H37Rv)</name>
    <dbReference type="NCBI Taxonomy" id="83332"/>
    <lineage>
        <taxon>Bacteria</taxon>
        <taxon>Bacillati</taxon>
        <taxon>Actinomycetota</taxon>
        <taxon>Actinomycetes</taxon>
        <taxon>Mycobacteriales</taxon>
        <taxon>Mycobacteriaceae</taxon>
        <taxon>Mycobacterium</taxon>
        <taxon>Mycobacterium tuberculosis complex</taxon>
    </lineage>
</organism>
<feature type="chain" id="PRO_0000113936" description="Transcription termination/antitermination protein NusG">
    <location>
        <begin position="1"/>
        <end position="238"/>
    </location>
</feature>
<feature type="helix" evidence="3">
    <location>
        <begin position="34"/>
        <end position="44"/>
    </location>
</feature>
<feature type="strand" evidence="3">
    <location>
        <begin position="45"/>
        <end position="54"/>
    </location>
</feature>
<feature type="helix" evidence="3">
    <location>
        <begin position="60"/>
        <end position="72"/>
    </location>
</feature>
<feature type="turn" evidence="3">
    <location>
        <begin position="76"/>
        <end position="78"/>
    </location>
</feature>
<feature type="strand" evidence="3">
    <location>
        <begin position="79"/>
        <end position="83"/>
    </location>
</feature>
<feature type="strand" evidence="3">
    <location>
        <begin position="86"/>
        <end position="91"/>
    </location>
</feature>
<feature type="helix" evidence="3">
    <location>
        <begin position="93"/>
        <end position="95"/>
    </location>
</feature>
<feature type="strand" evidence="3">
    <location>
        <begin position="98"/>
        <end position="105"/>
    </location>
</feature>
<feature type="strand" evidence="3">
    <location>
        <begin position="108"/>
        <end position="113"/>
    </location>
</feature>
<feature type="helix" evidence="3">
    <location>
        <begin position="117"/>
        <end position="124"/>
    </location>
</feature>
<feature type="strand" evidence="3">
    <location>
        <begin position="129"/>
        <end position="139"/>
    </location>
</feature>
<feature type="helix" evidence="3">
    <location>
        <begin position="144"/>
        <end position="150"/>
    </location>
</feature>
<feature type="strand" evidence="2">
    <location>
        <begin position="190"/>
        <end position="193"/>
    </location>
</feature>
<feature type="strand" evidence="2">
    <location>
        <begin position="200"/>
        <end position="209"/>
    </location>
</feature>
<feature type="turn" evidence="2">
    <location>
        <begin position="210"/>
        <end position="213"/>
    </location>
</feature>
<feature type="strand" evidence="2">
    <location>
        <begin position="214"/>
        <end position="219"/>
    </location>
</feature>
<feature type="turn" evidence="2">
    <location>
        <begin position="222"/>
        <end position="224"/>
    </location>
</feature>
<feature type="strand" evidence="2">
    <location>
        <begin position="226"/>
        <end position="231"/>
    </location>
</feature>
<feature type="strand" evidence="2">
    <location>
        <begin position="234"/>
        <end position="237"/>
    </location>
</feature>
<gene>
    <name evidence="1" type="primary">nusG</name>
    <name type="ordered locus">Rv0639</name>
    <name type="ORF">MTCY20H10.20</name>
</gene>